<evidence type="ECO:0000255" key="1"/>
<evidence type="ECO:0000255" key="2">
    <source>
        <dbReference type="PROSITE-ProRule" id="PRU00517"/>
    </source>
</evidence>
<evidence type="ECO:0000255" key="3">
    <source>
        <dbReference type="PROSITE-ProRule" id="PRU01007"/>
    </source>
</evidence>
<evidence type="ECO:0000256" key="4">
    <source>
        <dbReference type="SAM" id="MobiDB-lite"/>
    </source>
</evidence>
<evidence type="ECO:0000269" key="5">
    <source>
    </source>
</evidence>
<evidence type="ECO:0000269" key="6">
    <source>
    </source>
</evidence>
<evidence type="ECO:0000269" key="7">
    <source>
    </source>
</evidence>
<evidence type="ECO:0000303" key="8">
    <source>
    </source>
</evidence>
<evidence type="ECO:0000303" key="9">
    <source ref="1"/>
</evidence>
<evidence type="ECO:0000305" key="10"/>
<evidence type="ECO:0000312" key="11">
    <source>
        <dbReference type="Araport" id="AT3G07630"/>
    </source>
</evidence>
<evidence type="ECO:0000312" key="12">
    <source>
        <dbReference type="EMBL" id="AAF13081.1"/>
    </source>
</evidence>
<dbReference type="EC" id="4.2.1.51" evidence="5"/>
<dbReference type="EC" id="4.2.1.91" evidence="5"/>
<dbReference type="EMBL" id="DQ411465">
    <property type="protein sequence ID" value="ABD67751.1"/>
    <property type="molecule type" value="mRNA"/>
</dbReference>
<dbReference type="EMBL" id="AC009176">
    <property type="protein sequence ID" value="AAF13081.1"/>
    <property type="molecule type" value="Genomic_DNA"/>
</dbReference>
<dbReference type="EMBL" id="CP002686">
    <property type="protein sequence ID" value="AEE74577.1"/>
    <property type="molecule type" value="Genomic_DNA"/>
</dbReference>
<dbReference type="EMBL" id="CP002686">
    <property type="protein sequence ID" value="AEE74578.1"/>
    <property type="molecule type" value="Genomic_DNA"/>
</dbReference>
<dbReference type="EMBL" id="CP002686">
    <property type="protein sequence ID" value="ANM63416.1"/>
    <property type="molecule type" value="Genomic_DNA"/>
</dbReference>
<dbReference type="EMBL" id="AY050813">
    <property type="protein sequence ID" value="AAK92748.1"/>
    <property type="molecule type" value="mRNA"/>
</dbReference>
<dbReference type="EMBL" id="AY113967">
    <property type="protein sequence ID" value="AAM45015.1"/>
    <property type="molecule type" value="mRNA"/>
</dbReference>
<dbReference type="EMBL" id="AY084830">
    <property type="protein sequence ID" value="AAM61395.1"/>
    <property type="molecule type" value="mRNA"/>
</dbReference>
<dbReference type="RefSeq" id="NP_001325505.1">
    <property type="nucleotide sequence ID" value="NM_001337726.1"/>
</dbReference>
<dbReference type="RefSeq" id="NP_187420.1">
    <property type="nucleotide sequence ID" value="NM_111642.3"/>
</dbReference>
<dbReference type="RefSeq" id="NP_974249.1">
    <property type="nucleotide sequence ID" value="NM_202520.2"/>
</dbReference>
<dbReference type="SMR" id="Q9SSE7"/>
<dbReference type="FunCoup" id="Q9SSE7">
    <property type="interactions" value="813"/>
</dbReference>
<dbReference type="STRING" id="3702.Q9SSE7"/>
<dbReference type="MoonProt" id="Q9SSE7"/>
<dbReference type="iPTMnet" id="Q9SSE7"/>
<dbReference type="PaxDb" id="3702-AT3G07630.1"/>
<dbReference type="ProteomicsDB" id="246958"/>
<dbReference type="EnsemblPlants" id="AT3G07630.1">
    <property type="protein sequence ID" value="AT3G07630.1"/>
    <property type="gene ID" value="AT3G07630"/>
</dbReference>
<dbReference type="EnsemblPlants" id="AT3G07630.2">
    <property type="protein sequence ID" value="AT3G07630.2"/>
    <property type="gene ID" value="AT3G07630"/>
</dbReference>
<dbReference type="EnsemblPlants" id="AT3G07630.3">
    <property type="protein sequence ID" value="AT3G07630.3"/>
    <property type="gene ID" value="AT3G07630"/>
</dbReference>
<dbReference type="GeneID" id="819954"/>
<dbReference type="Gramene" id="AT3G07630.1">
    <property type="protein sequence ID" value="AT3G07630.1"/>
    <property type="gene ID" value="AT3G07630"/>
</dbReference>
<dbReference type="Gramene" id="AT3G07630.2">
    <property type="protein sequence ID" value="AT3G07630.2"/>
    <property type="gene ID" value="AT3G07630"/>
</dbReference>
<dbReference type="Gramene" id="AT3G07630.3">
    <property type="protein sequence ID" value="AT3G07630.3"/>
    <property type="gene ID" value="AT3G07630"/>
</dbReference>
<dbReference type="KEGG" id="ath:AT3G07630"/>
<dbReference type="Araport" id="AT3G07630"/>
<dbReference type="TAIR" id="AT3G07630">
    <property type="gene designation" value="ADT2"/>
</dbReference>
<dbReference type="eggNOG" id="KOG2797">
    <property type="taxonomic scope" value="Eukaryota"/>
</dbReference>
<dbReference type="HOGENOM" id="CLU_035008_4_0_1"/>
<dbReference type="InParanoid" id="Q9SSE7"/>
<dbReference type="OMA" id="PLMIYRE"/>
<dbReference type="PhylomeDB" id="Q9SSE7"/>
<dbReference type="BioCyc" id="ARA:AT3G07630-MONOMER"/>
<dbReference type="BRENDA" id="4.2.1.91">
    <property type="organism ID" value="399"/>
</dbReference>
<dbReference type="SABIO-RK" id="Q9SSE7"/>
<dbReference type="UniPathway" id="UPA00121">
    <property type="reaction ID" value="UER00344"/>
</dbReference>
<dbReference type="UniPathway" id="UPA00121">
    <property type="reaction ID" value="UER00345"/>
</dbReference>
<dbReference type="PRO" id="PR:Q9SSE7"/>
<dbReference type="Proteomes" id="UP000006548">
    <property type="component" value="Chromosome 3"/>
</dbReference>
<dbReference type="ExpressionAtlas" id="Q9SSE7">
    <property type="expression patterns" value="baseline and differential"/>
</dbReference>
<dbReference type="GO" id="GO:0009507">
    <property type="term" value="C:chloroplast"/>
    <property type="evidence" value="ECO:0000314"/>
    <property type="project" value="TAIR"/>
</dbReference>
<dbReference type="GO" id="GO:0009570">
    <property type="term" value="C:chloroplast stroma"/>
    <property type="evidence" value="ECO:0007669"/>
    <property type="project" value="UniProtKB-SubCell"/>
</dbReference>
<dbReference type="GO" id="GO:0010319">
    <property type="term" value="C:stromule"/>
    <property type="evidence" value="ECO:0000314"/>
    <property type="project" value="UniProtKB"/>
</dbReference>
<dbReference type="GO" id="GO:0047769">
    <property type="term" value="F:arogenate dehydratase activity"/>
    <property type="evidence" value="ECO:0000314"/>
    <property type="project" value="TAIR"/>
</dbReference>
<dbReference type="GO" id="GO:0004664">
    <property type="term" value="F:prephenate dehydratase activity"/>
    <property type="evidence" value="ECO:0000314"/>
    <property type="project" value="UniProtKB"/>
</dbReference>
<dbReference type="GO" id="GO:0010020">
    <property type="term" value="P:chloroplast fission"/>
    <property type="evidence" value="ECO:0000315"/>
    <property type="project" value="UniProtKB"/>
</dbReference>
<dbReference type="GO" id="GO:0009094">
    <property type="term" value="P:L-phenylalanine biosynthetic process"/>
    <property type="evidence" value="ECO:0007669"/>
    <property type="project" value="UniProtKB-UniPathway"/>
</dbReference>
<dbReference type="CDD" id="cd04905">
    <property type="entry name" value="ACT_CM-PDT"/>
    <property type="match status" value="1"/>
</dbReference>
<dbReference type="CDD" id="cd13631">
    <property type="entry name" value="PBP2_Ct-PDT_like"/>
    <property type="match status" value="1"/>
</dbReference>
<dbReference type="FunFam" id="3.40.190.10:FF:000028">
    <property type="entry name" value="Arogenate dehydratase"/>
    <property type="match status" value="1"/>
</dbReference>
<dbReference type="FunFam" id="3.40.190.10:FF:000031">
    <property type="entry name" value="Arogenate dehydratase"/>
    <property type="match status" value="1"/>
</dbReference>
<dbReference type="Gene3D" id="3.30.70.260">
    <property type="match status" value="1"/>
</dbReference>
<dbReference type="Gene3D" id="3.40.190.10">
    <property type="entry name" value="Periplasmic binding protein-like II"/>
    <property type="match status" value="2"/>
</dbReference>
<dbReference type="InterPro" id="IPR045865">
    <property type="entry name" value="ACT-like_dom_sf"/>
</dbReference>
<dbReference type="InterPro" id="IPR002912">
    <property type="entry name" value="ACT_dom"/>
</dbReference>
<dbReference type="InterPro" id="IPR001086">
    <property type="entry name" value="Preph_deHydtase"/>
</dbReference>
<dbReference type="InterPro" id="IPR018528">
    <property type="entry name" value="Preph_deHydtase_CS"/>
</dbReference>
<dbReference type="NCBIfam" id="NF008865">
    <property type="entry name" value="PRK11898.1"/>
    <property type="match status" value="1"/>
</dbReference>
<dbReference type="PANTHER" id="PTHR21022:SF42">
    <property type="entry name" value="AROGENATE DEHYDRATASE_PREPHENATE DEHYDRATASE 2, CHLOROPLASTIC"/>
    <property type="match status" value="1"/>
</dbReference>
<dbReference type="PANTHER" id="PTHR21022">
    <property type="entry name" value="PREPHENATE DEHYDRATASE P PROTEIN"/>
    <property type="match status" value="1"/>
</dbReference>
<dbReference type="Pfam" id="PF00800">
    <property type="entry name" value="PDT"/>
    <property type="match status" value="1"/>
</dbReference>
<dbReference type="SUPFAM" id="SSF55021">
    <property type="entry name" value="ACT-like"/>
    <property type="match status" value="1"/>
</dbReference>
<dbReference type="SUPFAM" id="SSF53850">
    <property type="entry name" value="Periplasmic binding protein-like II"/>
    <property type="match status" value="1"/>
</dbReference>
<dbReference type="PROSITE" id="PS51671">
    <property type="entry name" value="ACT"/>
    <property type="match status" value="1"/>
</dbReference>
<dbReference type="PROSITE" id="PS00857">
    <property type="entry name" value="PREPHENATE_DEHYDR_1"/>
    <property type="match status" value="1"/>
</dbReference>
<dbReference type="PROSITE" id="PS00858">
    <property type="entry name" value="PREPHENATE_DEHYDR_2"/>
    <property type="match status" value="1"/>
</dbReference>
<dbReference type="PROSITE" id="PS51171">
    <property type="entry name" value="PREPHENATE_DEHYDR_3"/>
    <property type="match status" value="1"/>
</dbReference>
<comment type="function">
    <text evidence="5 7">Converts the prephenate produced from the shikimate-chorismate pathway into phenylalanine (PubMed:17726025). Dehydratase that uses arogenate and prephenate as substrates (PubMed:17726025). Utilzes more efficiently arogenate than prephenate (PubMed:17726025). Required for chloroplast division prior to ARC5, but in an ARC3- and ARC6-dependent manner, especially involved in the Z-ring formation (PubMed:30252596).</text>
</comment>
<comment type="catalytic activity">
    <reaction evidence="5">
        <text>L-arogenate + H(+) = L-phenylalanine + CO2 + H2O</text>
        <dbReference type="Rhea" id="RHEA:12536"/>
        <dbReference type="ChEBI" id="CHEBI:15377"/>
        <dbReference type="ChEBI" id="CHEBI:15378"/>
        <dbReference type="ChEBI" id="CHEBI:16526"/>
        <dbReference type="ChEBI" id="CHEBI:58095"/>
        <dbReference type="ChEBI" id="CHEBI:58180"/>
        <dbReference type="EC" id="4.2.1.91"/>
    </reaction>
    <physiologicalReaction direction="left-to-right" evidence="5">
        <dbReference type="Rhea" id="RHEA:12537"/>
    </physiologicalReaction>
</comment>
<comment type="catalytic activity">
    <reaction evidence="5">
        <text>prephenate + H(+) = 3-phenylpyruvate + CO2 + H2O</text>
        <dbReference type="Rhea" id="RHEA:21648"/>
        <dbReference type="ChEBI" id="CHEBI:15377"/>
        <dbReference type="ChEBI" id="CHEBI:15378"/>
        <dbReference type="ChEBI" id="CHEBI:16526"/>
        <dbReference type="ChEBI" id="CHEBI:18005"/>
        <dbReference type="ChEBI" id="CHEBI:29934"/>
        <dbReference type="EC" id="4.2.1.51"/>
    </reaction>
    <physiologicalReaction direction="left-to-right" evidence="5">
        <dbReference type="Rhea" id="RHEA:21649"/>
    </physiologicalReaction>
</comment>
<comment type="biophysicochemical properties">
    <kinetics>
        <KM evidence="5">0.8 mM for arogenate</KM>
        <KM evidence="5">0.68 mM for prephenate</KM>
        <Vmax evidence="5">60.6 pmol/sec/ug enzyme with arogenate as substrate</Vmax>
        <Vmax evidence="5">1.6 pmol/sec/ug enzyme with prephenate as substrate</Vmax>
    </kinetics>
</comment>
<comment type="pathway">
    <text evidence="5">Amino-acid biosynthesis; L-phenylalanine biosynthesis; L-phenylalanine from L-arogenate: step 1/1.</text>
</comment>
<comment type="pathway">
    <text evidence="5">Amino-acid biosynthesis; L-phenylalanine biosynthesis; phenylpyruvate from prephenate: step 1/1.</text>
</comment>
<comment type="subcellular location">
    <subcellularLocation>
        <location evidence="6 7">Plastid</location>
        <location evidence="6 7">Chloroplast stroma</location>
    </subcellularLocation>
    <text evidence="7">Observed in chloroplast stromules, and as a ring around the equatorial plane of dividing plastids, thus colocalizing with FtsZ1 and FtsZ2.</text>
</comment>
<comment type="tissue specificity">
    <text evidence="5">Expressed in roots, leaves, stems, flowers and siliques. Most abundant in leaves and seeds.</text>
</comment>
<comment type="disruption phenotype">
    <text evidence="7">Large and misshapen chloroplasts with distorted and irregular outlines.</text>
</comment>
<sequence length="381" mass="42115">MAMHTVRLSPATQLHGGISSNLSPPNRKPNNSIVRYGCGSSKRFRIVTVLASLRENDANGRDNSVRAMEVKKIFEDSPLLPKPLSSNQLTESVSNGSRVRVAYQGVRGAYSESAAEKAYPNCEAVPCEEFDTAFEAVERWLVDRAVLPIENSLGGSIHRNYDLLLRHNLHIVGEVKLAVRHCLLANHGVNIEDLRRVLSHPQALAQCENTLTKLGLVREAVDDTAGAAKQIAFENLNDAAAVASEKAAKIYGLNIVAKDIQDDCDNVTRFLMLAREPIIPGTNRLFKTSIVFSLEEGPGVLFKALAVFALRQINLTKIESRPLRKHPLRASGGLKYFDYLFYVDFEASMADEVAQNALRHLEEFATFLRVLGSYPVDTTML</sequence>
<gene>
    <name evidence="8 9" type="primary">ADT2</name>
    <name evidence="8" type="synonym">PDT2</name>
    <name evidence="11" type="ordered locus">At3g07630</name>
    <name evidence="12" type="ORF">MLP3.8</name>
</gene>
<protein>
    <recommendedName>
        <fullName evidence="8 9">Arogenate dehydratase/prephenate dehydratase 2, chloroplastic</fullName>
        <shortName evidence="8 9">AtADT2</shortName>
        <shortName evidence="8">AtPDT2</shortName>
        <ecNumber evidence="5">4.2.1.51</ecNumber>
        <ecNumber evidence="5">4.2.1.91</ecNumber>
    </recommendedName>
</protein>
<name>AROD2_ARATH</name>
<accession>Q9SSE7</accession>
<accession>Q8LFI1</accession>
<keyword id="KW-0028">Amino-acid biosynthesis</keyword>
<keyword id="KW-0057">Aromatic amino acid biosynthesis</keyword>
<keyword id="KW-0150">Chloroplast</keyword>
<keyword id="KW-0456">Lyase</keyword>
<keyword id="KW-0584">Phenylalanine biosynthesis</keyword>
<keyword id="KW-0934">Plastid</keyword>
<keyword id="KW-1185">Reference proteome</keyword>
<keyword id="KW-0809">Transit peptide</keyword>
<reference key="1">
    <citation type="submission" date="2006-02" db="EMBL/GenBank/DDBJ databases">
        <authorList>
            <person name="Matringe M."/>
            <person name="Grisollet D."/>
            <person name="Rippert P."/>
        </authorList>
    </citation>
    <scope>NUCLEOTIDE SEQUENCE [MRNA]</scope>
    <source>
        <strain>cv. Columbia</strain>
    </source>
</reference>
<reference key="2">
    <citation type="journal article" date="2000" name="Nature">
        <title>Sequence and analysis of chromosome 3 of the plant Arabidopsis thaliana.</title>
        <authorList>
            <person name="Salanoubat M."/>
            <person name="Lemcke K."/>
            <person name="Rieger M."/>
            <person name="Ansorge W."/>
            <person name="Unseld M."/>
            <person name="Fartmann B."/>
            <person name="Valle G."/>
            <person name="Bloecker H."/>
            <person name="Perez-Alonso M."/>
            <person name="Obermaier B."/>
            <person name="Delseny M."/>
            <person name="Boutry M."/>
            <person name="Grivell L.A."/>
            <person name="Mache R."/>
            <person name="Puigdomenech P."/>
            <person name="De Simone V."/>
            <person name="Choisne N."/>
            <person name="Artiguenave F."/>
            <person name="Robert C."/>
            <person name="Brottier P."/>
            <person name="Wincker P."/>
            <person name="Cattolico L."/>
            <person name="Weissenbach J."/>
            <person name="Saurin W."/>
            <person name="Quetier F."/>
            <person name="Schaefer M."/>
            <person name="Mueller-Auer S."/>
            <person name="Gabel C."/>
            <person name="Fuchs M."/>
            <person name="Benes V."/>
            <person name="Wurmbach E."/>
            <person name="Drzonek H."/>
            <person name="Erfle H."/>
            <person name="Jordan N."/>
            <person name="Bangert S."/>
            <person name="Wiedelmann R."/>
            <person name="Kranz H."/>
            <person name="Voss H."/>
            <person name="Holland R."/>
            <person name="Brandt P."/>
            <person name="Nyakatura G."/>
            <person name="Vezzi A."/>
            <person name="D'Angelo M."/>
            <person name="Pallavicini A."/>
            <person name="Toppo S."/>
            <person name="Simionati B."/>
            <person name="Conrad A."/>
            <person name="Hornischer K."/>
            <person name="Kauer G."/>
            <person name="Loehnert T.-H."/>
            <person name="Nordsiek G."/>
            <person name="Reichelt J."/>
            <person name="Scharfe M."/>
            <person name="Schoen O."/>
            <person name="Bargues M."/>
            <person name="Terol J."/>
            <person name="Climent J."/>
            <person name="Navarro P."/>
            <person name="Collado C."/>
            <person name="Perez-Perez A."/>
            <person name="Ottenwaelder B."/>
            <person name="Duchemin D."/>
            <person name="Cooke R."/>
            <person name="Laudie M."/>
            <person name="Berger-Llauro C."/>
            <person name="Purnelle B."/>
            <person name="Masuy D."/>
            <person name="de Haan M."/>
            <person name="Maarse A.C."/>
            <person name="Alcaraz J.-P."/>
            <person name="Cottet A."/>
            <person name="Casacuberta E."/>
            <person name="Monfort A."/>
            <person name="Argiriou A."/>
            <person name="Flores M."/>
            <person name="Liguori R."/>
            <person name="Vitale D."/>
            <person name="Mannhaupt G."/>
            <person name="Haase D."/>
            <person name="Schoof H."/>
            <person name="Rudd S."/>
            <person name="Zaccaria P."/>
            <person name="Mewes H.-W."/>
            <person name="Mayer K.F.X."/>
            <person name="Kaul S."/>
            <person name="Town C.D."/>
            <person name="Koo H.L."/>
            <person name="Tallon L.J."/>
            <person name="Jenkins J."/>
            <person name="Rooney T."/>
            <person name="Rizzo M."/>
            <person name="Walts A."/>
            <person name="Utterback T."/>
            <person name="Fujii C.Y."/>
            <person name="Shea T.P."/>
            <person name="Creasy T.H."/>
            <person name="Haas B."/>
            <person name="Maiti R."/>
            <person name="Wu D."/>
            <person name="Peterson J."/>
            <person name="Van Aken S."/>
            <person name="Pai G."/>
            <person name="Militscher J."/>
            <person name="Sellers P."/>
            <person name="Gill J.E."/>
            <person name="Feldblyum T.V."/>
            <person name="Preuss D."/>
            <person name="Lin X."/>
            <person name="Nierman W.C."/>
            <person name="Salzberg S.L."/>
            <person name="White O."/>
            <person name="Venter J.C."/>
            <person name="Fraser C.M."/>
            <person name="Kaneko T."/>
            <person name="Nakamura Y."/>
            <person name="Sato S."/>
            <person name="Kato T."/>
            <person name="Asamizu E."/>
            <person name="Sasamoto S."/>
            <person name="Kimura T."/>
            <person name="Idesawa K."/>
            <person name="Kawashima K."/>
            <person name="Kishida Y."/>
            <person name="Kiyokawa C."/>
            <person name="Kohara M."/>
            <person name="Matsumoto M."/>
            <person name="Matsuno A."/>
            <person name="Muraki A."/>
            <person name="Nakayama S."/>
            <person name="Nakazaki N."/>
            <person name="Shinpo S."/>
            <person name="Takeuchi C."/>
            <person name="Wada T."/>
            <person name="Watanabe A."/>
            <person name="Yamada M."/>
            <person name="Yasuda M."/>
            <person name="Tabata S."/>
        </authorList>
    </citation>
    <scope>NUCLEOTIDE SEQUENCE [LARGE SCALE GENOMIC DNA]</scope>
    <source>
        <strain>cv. Columbia</strain>
    </source>
</reference>
<reference key="3">
    <citation type="journal article" date="2017" name="Plant J.">
        <title>Araport11: a complete reannotation of the Arabidopsis thaliana reference genome.</title>
        <authorList>
            <person name="Cheng C.Y."/>
            <person name="Krishnakumar V."/>
            <person name="Chan A.P."/>
            <person name="Thibaud-Nissen F."/>
            <person name="Schobel S."/>
            <person name="Town C.D."/>
        </authorList>
    </citation>
    <scope>GENOME REANNOTATION</scope>
    <source>
        <strain>cv. Columbia</strain>
    </source>
</reference>
<reference key="4">
    <citation type="journal article" date="2003" name="Science">
        <title>Empirical analysis of transcriptional activity in the Arabidopsis genome.</title>
        <authorList>
            <person name="Yamada K."/>
            <person name="Lim J."/>
            <person name="Dale J.M."/>
            <person name="Chen H."/>
            <person name="Shinn P."/>
            <person name="Palm C.J."/>
            <person name="Southwick A.M."/>
            <person name="Wu H.C."/>
            <person name="Kim C.J."/>
            <person name="Nguyen M."/>
            <person name="Pham P.K."/>
            <person name="Cheuk R.F."/>
            <person name="Karlin-Newmann G."/>
            <person name="Liu S.X."/>
            <person name="Lam B."/>
            <person name="Sakano H."/>
            <person name="Wu T."/>
            <person name="Yu G."/>
            <person name="Miranda M."/>
            <person name="Quach H.L."/>
            <person name="Tripp M."/>
            <person name="Chang C.H."/>
            <person name="Lee J.M."/>
            <person name="Toriumi M.J."/>
            <person name="Chan M.M."/>
            <person name="Tang C.C."/>
            <person name="Onodera C.S."/>
            <person name="Deng J.M."/>
            <person name="Akiyama K."/>
            <person name="Ansari Y."/>
            <person name="Arakawa T."/>
            <person name="Banh J."/>
            <person name="Banno F."/>
            <person name="Bowser L."/>
            <person name="Brooks S.Y."/>
            <person name="Carninci P."/>
            <person name="Chao Q."/>
            <person name="Choy N."/>
            <person name="Enju A."/>
            <person name="Goldsmith A.D."/>
            <person name="Gurjal M."/>
            <person name="Hansen N.F."/>
            <person name="Hayashizaki Y."/>
            <person name="Johnson-Hopson C."/>
            <person name="Hsuan V.W."/>
            <person name="Iida K."/>
            <person name="Karnes M."/>
            <person name="Khan S."/>
            <person name="Koesema E."/>
            <person name="Ishida J."/>
            <person name="Jiang P.X."/>
            <person name="Jones T."/>
            <person name="Kawai J."/>
            <person name="Kamiya A."/>
            <person name="Meyers C."/>
            <person name="Nakajima M."/>
            <person name="Narusaka M."/>
            <person name="Seki M."/>
            <person name="Sakurai T."/>
            <person name="Satou M."/>
            <person name="Tamse R."/>
            <person name="Vaysberg M."/>
            <person name="Wallender E.K."/>
            <person name="Wong C."/>
            <person name="Yamamura Y."/>
            <person name="Yuan S."/>
            <person name="Shinozaki K."/>
            <person name="Davis R.W."/>
            <person name="Theologis A."/>
            <person name="Ecker J.R."/>
        </authorList>
    </citation>
    <scope>NUCLEOTIDE SEQUENCE [LARGE SCALE MRNA]</scope>
    <source>
        <strain>cv. Columbia</strain>
    </source>
</reference>
<reference key="5">
    <citation type="submission" date="2002-03" db="EMBL/GenBank/DDBJ databases">
        <title>Full-length cDNA from Arabidopsis thaliana.</title>
        <authorList>
            <person name="Brover V.V."/>
            <person name="Troukhan M.E."/>
            <person name="Alexandrov N.A."/>
            <person name="Lu Y.-P."/>
            <person name="Flavell R.B."/>
            <person name="Feldmann K.A."/>
        </authorList>
    </citation>
    <scope>NUCLEOTIDE SEQUENCE [LARGE SCALE MRNA]</scope>
</reference>
<reference key="6">
    <citation type="journal article" date="2007" name="J. Biol. Chem.">
        <title>Phenylalanine biosynthesis in Arabidopsis thaliana. Identification and characterization of arogenate dehydratases.</title>
        <authorList>
            <person name="Cho M.-H."/>
            <person name="Corea O.R.A."/>
            <person name="Yang H."/>
            <person name="Bedgar D.L."/>
            <person name="Laskar D.D."/>
            <person name="Anterola A.M."/>
            <person name="Moog-Anterola F.A."/>
            <person name="Hood R.L."/>
            <person name="Kohalmi S.E."/>
            <person name="Bernards M.A."/>
            <person name="Kang C."/>
            <person name="Davin L.B."/>
            <person name="Lewis N.G."/>
        </authorList>
    </citation>
    <scope>FUNCTION</scope>
    <scope>TISSUE SPECIFICITY</scope>
    <scope>BIOPHYSICOCHEMICAL PROPERTIES</scope>
    <scope>CATALYTIC ACTIVITY</scope>
    <scope>PATHWAY</scope>
</reference>
<reference key="7">
    <citation type="journal article" date="2009" name="Plant Physiol.">
        <title>Tyrosine and phenylalanine are synthesized within the plastids in Arabidopsis.</title>
        <authorList>
            <person name="Rippert P."/>
            <person name="Puyaubert J."/>
            <person name="Grisollet D."/>
            <person name="Derrier L."/>
            <person name="Matringe M."/>
        </authorList>
    </citation>
    <scope>SUBCELLULAR LOCATION</scope>
</reference>
<reference key="8">
    <citation type="journal article" date="2018" name="Plant Signal. Behav.">
        <title>Moonlighting proteins: putting the spotlight on enzymes.</title>
        <authorList>
            <person name="Abolhassani Rad S."/>
            <person name="Clayton E.J."/>
            <person name="Cornelius E.J."/>
            <person name="Howes T.R."/>
            <person name="Kohalmi S.E."/>
        </authorList>
    </citation>
    <scope>FUNCTION</scope>
    <scope>DISRUPTION PHENOTYPE</scope>
    <scope>SUBCELLULAR LOCATION</scope>
    <source>
        <strain>cv. Columbia</strain>
    </source>
</reference>
<proteinExistence type="evidence at protein level"/>
<organism>
    <name type="scientific">Arabidopsis thaliana</name>
    <name type="common">Mouse-ear cress</name>
    <dbReference type="NCBI Taxonomy" id="3702"/>
    <lineage>
        <taxon>Eukaryota</taxon>
        <taxon>Viridiplantae</taxon>
        <taxon>Streptophyta</taxon>
        <taxon>Embryophyta</taxon>
        <taxon>Tracheophyta</taxon>
        <taxon>Spermatophyta</taxon>
        <taxon>Magnoliopsida</taxon>
        <taxon>eudicotyledons</taxon>
        <taxon>Gunneridae</taxon>
        <taxon>Pentapetalae</taxon>
        <taxon>rosids</taxon>
        <taxon>malvids</taxon>
        <taxon>Brassicales</taxon>
        <taxon>Brassicaceae</taxon>
        <taxon>Camelineae</taxon>
        <taxon>Arabidopsis</taxon>
    </lineage>
</organism>
<feature type="transit peptide" description="Chloroplast" evidence="1">
    <location>
        <begin position="1"/>
        <end position="66"/>
    </location>
</feature>
<feature type="chain" id="PRO_0000373791" description="Arogenate dehydratase/prephenate dehydratase 2, chloroplastic">
    <location>
        <begin position="67"/>
        <end position="381"/>
    </location>
</feature>
<feature type="domain" description="Prephenate dehydratase" evidence="2">
    <location>
        <begin position="100"/>
        <end position="275"/>
    </location>
</feature>
<feature type="domain" description="ACT" evidence="3">
    <location>
        <begin position="289"/>
        <end position="375"/>
    </location>
</feature>
<feature type="region of interest" description="Disordered" evidence="4">
    <location>
        <begin position="1"/>
        <end position="32"/>
    </location>
</feature>
<feature type="compositionally biased region" description="Polar residues" evidence="4">
    <location>
        <begin position="18"/>
        <end position="32"/>
    </location>
</feature>
<feature type="sequence conflict" description="In Ref. 5; AAM61395." evidence="10" ref="5">
    <original>P</original>
    <variation>S</variation>
    <location>
        <position position="25"/>
    </location>
</feature>